<dbReference type="EC" id="2.8.1.8" evidence="1"/>
<dbReference type="EMBL" id="CP000155">
    <property type="protein sequence ID" value="ABC32486.1"/>
    <property type="molecule type" value="Genomic_DNA"/>
</dbReference>
<dbReference type="RefSeq" id="WP_011399545.1">
    <property type="nucleotide sequence ID" value="NC_007645.1"/>
</dbReference>
<dbReference type="SMR" id="Q2SA38"/>
<dbReference type="STRING" id="349521.HCH_05836"/>
<dbReference type="KEGG" id="hch:HCH_05836"/>
<dbReference type="eggNOG" id="COG0320">
    <property type="taxonomic scope" value="Bacteria"/>
</dbReference>
<dbReference type="HOGENOM" id="CLU_033144_2_1_6"/>
<dbReference type="OrthoDB" id="9787898at2"/>
<dbReference type="UniPathway" id="UPA00538">
    <property type="reaction ID" value="UER00593"/>
</dbReference>
<dbReference type="Proteomes" id="UP000000238">
    <property type="component" value="Chromosome"/>
</dbReference>
<dbReference type="GO" id="GO:0005737">
    <property type="term" value="C:cytoplasm"/>
    <property type="evidence" value="ECO:0007669"/>
    <property type="project" value="UniProtKB-SubCell"/>
</dbReference>
<dbReference type="GO" id="GO:0051539">
    <property type="term" value="F:4 iron, 4 sulfur cluster binding"/>
    <property type="evidence" value="ECO:0007669"/>
    <property type="project" value="UniProtKB-UniRule"/>
</dbReference>
<dbReference type="GO" id="GO:0016992">
    <property type="term" value="F:lipoate synthase activity"/>
    <property type="evidence" value="ECO:0007669"/>
    <property type="project" value="UniProtKB-UniRule"/>
</dbReference>
<dbReference type="GO" id="GO:0046872">
    <property type="term" value="F:metal ion binding"/>
    <property type="evidence" value="ECO:0007669"/>
    <property type="project" value="UniProtKB-KW"/>
</dbReference>
<dbReference type="CDD" id="cd01335">
    <property type="entry name" value="Radical_SAM"/>
    <property type="match status" value="1"/>
</dbReference>
<dbReference type="FunFam" id="3.20.20.70:FF:000023">
    <property type="entry name" value="Lipoyl synthase"/>
    <property type="match status" value="1"/>
</dbReference>
<dbReference type="Gene3D" id="3.20.20.70">
    <property type="entry name" value="Aldolase class I"/>
    <property type="match status" value="1"/>
</dbReference>
<dbReference type="HAMAP" id="MF_00206">
    <property type="entry name" value="Lipoyl_synth"/>
    <property type="match status" value="1"/>
</dbReference>
<dbReference type="InterPro" id="IPR013785">
    <property type="entry name" value="Aldolase_TIM"/>
</dbReference>
<dbReference type="InterPro" id="IPR006638">
    <property type="entry name" value="Elp3/MiaA/NifB-like_rSAM"/>
</dbReference>
<dbReference type="InterPro" id="IPR031691">
    <property type="entry name" value="LIAS_N"/>
</dbReference>
<dbReference type="InterPro" id="IPR003698">
    <property type="entry name" value="Lipoyl_synth"/>
</dbReference>
<dbReference type="InterPro" id="IPR007197">
    <property type="entry name" value="rSAM"/>
</dbReference>
<dbReference type="NCBIfam" id="TIGR00510">
    <property type="entry name" value="lipA"/>
    <property type="match status" value="1"/>
</dbReference>
<dbReference type="NCBIfam" id="NF004019">
    <property type="entry name" value="PRK05481.1"/>
    <property type="match status" value="1"/>
</dbReference>
<dbReference type="NCBIfam" id="NF009544">
    <property type="entry name" value="PRK12928.1"/>
    <property type="match status" value="1"/>
</dbReference>
<dbReference type="PANTHER" id="PTHR10949">
    <property type="entry name" value="LIPOYL SYNTHASE"/>
    <property type="match status" value="1"/>
</dbReference>
<dbReference type="PANTHER" id="PTHR10949:SF0">
    <property type="entry name" value="LIPOYL SYNTHASE, MITOCHONDRIAL"/>
    <property type="match status" value="1"/>
</dbReference>
<dbReference type="Pfam" id="PF16881">
    <property type="entry name" value="LIAS_N"/>
    <property type="match status" value="1"/>
</dbReference>
<dbReference type="Pfam" id="PF04055">
    <property type="entry name" value="Radical_SAM"/>
    <property type="match status" value="1"/>
</dbReference>
<dbReference type="PIRSF" id="PIRSF005963">
    <property type="entry name" value="Lipoyl_synth"/>
    <property type="match status" value="1"/>
</dbReference>
<dbReference type="SFLD" id="SFLDF00271">
    <property type="entry name" value="lipoyl_synthase"/>
    <property type="match status" value="1"/>
</dbReference>
<dbReference type="SFLD" id="SFLDS00029">
    <property type="entry name" value="Radical_SAM"/>
    <property type="match status" value="1"/>
</dbReference>
<dbReference type="SMART" id="SM00729">
    <property type="entry name" value="Elp3"/>
    <property type="match status" value="1"/>
</dbReference>
<dbReference type="SUPFAM" id="SSF102114">
    <property type="entry name" value="Radical SAM enzymes"/>
    <property type="match status" value="1"/>
</dbReference>
<dbReference type="PROSITE" id="PS51918">
    <property type="entry name" value="RADICAL_SAM"/>
    <property type="match status" value="1"/>
</dbReference>
<comment type="function">
    <text evidence="1">Catalyzes the radical-mediated insertion of two sulfur atoms into the C-6 and C-8 positions of the octanoyl moiety bound to the lipoyl domains of lipoate-dependent enzymes, thereby converting the octanoylated domains into lipoylated derivatives.</text>
</comment>
<comment type="catalytic activity">
    <reaction evidence="1">
        <text>[[Fe-S] cluster scaffold protein carrying a second [4Fe-4S](2+) cluster] + N(6)-octanoyl-L-lysyl-[protein] + 2 oxidized [2Fe-2S]-[ferredoxin] + 2 S-adenosyl-L-methionine + 4 H(+) = [[Fe-S] cluster scaffold protein] + N(6)-[(R)-dihydrolipoyl]-L-lysyl-[protein] + 4 Fe(3+) + 2 hydrogen sulfide + 2 5'-deoxyadenosine + 2 L-methionine + 2 reduced [2Fe-2S]-[ferredoxin]</text>
        <dbReference type="Rhea" id="RHEA:16585"/>
        <dbReference type="Rhea" id="RHEA-COMP:9928"/>
        <dbReference type="Rhea" id="RHEA-COMP:10000"/>
        <dbReference type="Rhea" id="RHEA-COMP:10001"/>
        <dbReference type="Rhea" id="RHEA-COMP:10475"/>
        <dbReference type="Rhea" id="RHEA-COMP:14568"/>
        <dbReference type="Rhea" id="RHEA-COMP:14569"/>
        <dbReference type="ChEBI" id="CHEBI:15378"/>
        <dbReference type="ChEBI" id="CHEBI:17319"/>
        <dbReference type="ChEBI" id="CHEBI:29034"/>
        <dbReference type="ChEBI" id="CHEBI:29919"/>
        <dbReference type="ChEBI" id="CHEBI:33722"/>
        <dbReference type="ChEBI" id="CHEBI:33737"/>
        <dbReference type="ChEBI" id="CHEBI:33738"/>
        <dbReference type="ChEBI" id="CHEBI:57844"/>
        <dbReference type="ChEBI" id="CHEBI:59789"/>
        <dbReference type="ChEBI" id="CHEBI:78809"/>
        <dbReference type="ChEBI" id="CHEBI:83100"/>
        <dbReference type="EC" id="2.8.1.8"/>
    </reaction>
</comment>
<comment type="cofactor">
    <cofactor evidence="1">
        <name>[4Fe-4S] cluster</name>
        <dbReference type="ChEBI" id="CHEBI:49883"/>
    </cofactor>
    <text evidence="1">Binds 2 [4Fe-4S] clusters per subunit. One cluster is coordinated with 3 cysteines and an exchangeable S-adenosyl-L-methionine.</text>
</comment>
<comment type="pathway">
    <text evidence="1">Protein modification; protein lipoylation via endogenous pathway; protein N(6)-(lipoyl)lysine from octanoyl-[acyl-carrier-protein]: step 2/2.</text>
</comment>
<comment type="subcellular location">
    <subcellularLocation>
        <location evidence="1">Cytoplasm</location>
    </subcellularLocation>
</comment>
<comment type="similarity">
    <text evidence="1">Belongs to the radical SAM superfamily. Lipoyl synthase family.</text>
</comment>
<accession>Q2SA38</accession>
<organism>
    <name type="scientific">Hahella chejuensis (strain KCTC 2396)</name>
    <dbReference type="NCBI Taxonomy" id="349521"/>
    <lineage>
        <taxon>Bacteria</taxon>
        <taxon>Pseudomonadati</taxon>
        <taxon>Pseudomonadota</taxon>
        <taxon>Gammaproteobacteria</taxon>
        <taxon>Oceanospirillales</taxon>
        <taxon>Hahellaceae</taxon>
        <taxon>Hahella</taxon>
    </lineage>
</organism>
<name>LIPA_HAHCH</name>
<proteinExistence type="inferred from homology"/>
<protein>
    <recommendedName>
        <fullName evidence="1">Lipoyl synthase</fullName>
        <ecNumber evidence="1">2.8.1.8</ecNumber>
    </recommendedName>
    <alternativeName>
        <fullName evidence="1">Lip-syn</fullName>
        <shortName evidence="1">LS</shortName>
    </alternativeName>
    <alternativeName>
        <fullName evidence="1">Lipoate synthase</fullName>
    </alternativeName>
    <alternativeName>
        <fullName evidence="1">Lipoic acid synthase</fullName>
    </alternativeName>
    <alternativeName>
        <fullName evidence="1">Sulfur insertion protein LipA</fullName>
    </alternativeName>
</protein>
<sequence>MSETNVQGSLAEAPKAAVKRVEQGVKLRGYDKVSRNPVKIIATDAVPRKPDWIRVRLSSSPSVEAIKQKLRKLNLHSVCEEASCPNLSECFSHGTATFMIMGDICTRRCPFCDVAHGRPNALDENEPTHLAQAIAEMNLKYVVITSVDRDDLRDGGAGHFAKCISESRKYSPNLKIEVLVPDFRGRMDVALDILRESPPDVFNHNLETVPRLYKQARPGADYAWSLLLLKRFKEAAPDVPTKSGLMLGIGEEIEEVKQVMRDLRAHNTDMLTLGQYLAPSKDHLPVVRFVHPDEFKELADYGYEIGFKQVASGPLVRSSYHADKQAAGETIS</sequence>
<keyword id="KW-0004">4Fe-4S</keyword>
<keyword id="KW-0963">Cytoplasm</keyword>
<keyword id="KW-0408">Iron</keyword>
<keyword id="KW-0411">Iron-sulfur</keyword>
<keyword id="KW-0479">Metal-binding</keyword>
<keyword id="KW-1185">Reference proteome</keyword>
<keyword id="KW-0949">S-adenosyl-L-methionine</keyword>
<keyword id="KW-0808">Transferase</keyword>
<evidence type="ECO:0000255" key="1">
    <source>
        <dbReference type="HAMAP-Rule" id="MF_00206"/>
    </source>
</evidence>
<evidence type="ECO:0000255" key="2">
    <source>
        <dbReference type="PROSITE-ProRule" id="PRU01266"/>
    </source>
</evidence>
<gene>
    <name evidence="1" type="primary">lipA</name>
    <name type="ordered locus">HCH_05836</name>
</gene>
<reference key="1">
    <citation type="journal article" date="2005" name="Nucleic Acids Res.">
        <title>Genomic blueprint of Hahella chejuensis, a marine microbe producing an algicidal agent.</title>
        <authorList>
            <person name="Jeong H."/>
            <person name="Yim J.H."/>
            <person name="Lee C."/>
            <person name="Choi S.-H."/>
            <person name="Park Y.K."/>
            <person name="Yoon S.H."/>
            <person name="Hur C.-G."/>
            <person name="Kang H.-Y."/>
            <person name="Kim D."/>
            <person name="Lee H.H."/>
            <person name="Park K.H."/>
            <person name="Park S.-H."/>
            <person name="Park H.-S."/>
            <person name="Lee H.K."/>
            <person name="Oh T.K."/>
            <person name="Kim J.F."/>
        </authorList>
    </citation>
    <scope>NUCLEOTIDE SEQUENCE [LARGE SCALE GENOMIC DNA]</scope>
    <source>
        <strain>KCTC 2396</strain>
    </source>
</reference>
<feature type="chain" id="PRO_0000325262" description="Lipoyl synthase">
    <location>
        <begin position="1"/>
        <end position="332"/>
    </location>
</feature>
<feature type="domain" description="Radical SAM core" evidence="2">
    <location>
        <begin position="91"/>
        <end position="308"/>
    </location>
</feature>
<feature type="binding site" evidence="1">
    <location>
        <position position="79"/>
    </location>
    <ligand>
        <name>[4Fe-4S] cluster</name>
        <dbReference type="ChEBI" id="CHEBI:49883"/>
        <label>1</label>
    </ligand>
</feature>
<feature type="binding site" evidence="1">
    <location>
        <position position="84"/>
    </location>
    <ligand>
        <name>[4Fe-4S] cluster</name>
        <dbReference type="ChEBI" id="CHEBI:49883"/>
        <label>1</label>
    </ligand>
</feature>
<feature type="binding site" evidence="1">
    <location>
        <position position="90"/>
    </location>
    <ligand>
        <name>[4Fe-4S] cluster</name>
        <dbReference type="ChEBI" id="CHEBI:49883"/>
        <label>1</label>
    </ligand>
</feature>
<feature type="binding site" evidence="1">
    <location>
        <position position="105"/>
    </location>
    <ligand>
        <name>[4Fe-4S] cluster</name>
        <dbReference type="ChEBI" id="CHEBI:49883"/>
        <label>2</label>
        <note>4Fe-4S-S-AdoMet</note>
    </ligand>
</feature>
<feature type="binding site" evidence="1">
    <location>
        <position position="109"/>
    </location>
    <ligand>
        <name>[4Fe-4S] cluster</name>
        <dbReference type="ChEBI" id="CHEBI:49883"/>
        <label>2</label>
        <note>4Fe-4S-S-AdoMet</note>
    </ligand>
</feature>
<feature type="binding site" evidence="1">
    <location>
        <position position="112"/>
    </location>
    <ligand>
        <name>[4Fe-4S] cluster</name>
        <dbReference type="ChEBI" id="CHEBI:49883"/>
        <label>2</label>
        <note>4Fe-4S-S-AdoMet</note>
    </ligand>
</feature>
<feature type="binding site" evidence="1">
    <location>
        <position position="319"/>
    </location>
    <ligand>
        <name>[4Fe-4S] cluster</name>
        <dbReference type="ChEBI" id="CHEBI:49883"/>
        <label>1</label>
    </ligand>
</feature>